<name>PYRDA_ENTFA</name>
<proteinExistence type="inferred from homology"/>
<dbReference type="EC" id="1.3.98.1"/>
<dbReference type="EMBL" id="AE016830">
    <property type="protein sequence ID" value="AAO80148.1"/>
    <property type="molecule type" value="Genomic_DNA"/>
</dbReference>
<dbReference type="RefSeq" id="NP_814077.1">
    <property type="nucleotide sequence ID" value="NC_004668.1"/>
</dbReference>
<dbReference type="SMR" id="P59626"/>
<dbReference type="STRING" id="226185.EF_0285"/>
<dbReference type="EnsemblBacteria" id="AAO80148">
    <property type="protein sequence ID" value="AAO80148"/>
    <property type="gene ID" value="EF_0285"/>
</dbReference>
<dbReference type="KEGG" id="efa:EF0285"/>
<dbReference type="PATRIC" id="fig|226185.9.peg.263"/>
<dbReference type="eggNOG" id="COG0167">
    <property type="taxonomic scope" value="Bacteria"/>
</dbReference>
<dbReference type="HOGENOM" id="CLU_042042_3_0_9"/>
<dbReference type="SABIO-RK" id="P59626"/>
<dbReference type="UniPathway" id="UPA00070"/>
<dbReference type="Proteomes" id="UP000001415">
    <property type="component" value="Chromosome"/>
</dbReference>
<dbReference type="GO" id="GO:0005737">
    <property type="term" value="C:cytoplasm"/>
    <property type="evidence" value="ECO:0007669"/>
    <property type="project" value="UniProtKB-SubCell"/>
</dbReference>
<dbReference type="GO" id="GO:1990663">
    <property type="term" value="F:dihydroorotate dehydrogenase (fumarate) activity"/>
    <property type="evidence" value="ECO:0007669"/>
    <property type="project" value="UniProtKB-EC"/>
</dbReference>
<dbReference type="GO" id="GO:0006207">
    <property type="term" value="P:'de novo' pyrimidine nucleobase biosynthetic process"/>
    <property type="evidence" value="ECO:0007669"/>
    <property type="project" value="InterPro"/>
</dbReference>
<dbReference type="GO" id="GO:0044205">
    <property type="term" value="P:'de novo' UMP biosynthetic process"/>
    <property type="evidence" value="ECO:0007669"/>
    <property type="project" value="UniProtKB-UniRule"/>
</dbReference>
<dbReference type="CDD" id="cd04741">
    <property type="entry name" value="DHOD_1A_like"/>
    <property type="match status" value="1"/>
</dbReference>
<dbReference type="FunFam" id="3.20.20.70:FF:000027">
    <property type="entry name" value="Dihydropyrimidine dehydrogenase [NADP(+)]"/>
    <property type="match status" value="1"/>
</dbReference>
<dbReference type="Gene3D" id="3.20.20.70">
    <property type="entry name" value="Aldolase class I"/>
    <property type="match status" value="1"/>
</dbReference>
<dbReference type="Gene3D" id="2.30.26.10">
    <property type="entry name" value="Dihydroorotate Dehydrogenase A, chain A, domain 2"/>
    <property type="match status" value="1"/>
</dbReference>
<dbReference type="HAMAP" id="MF_00224">
    <property type="entry name" value="DHO_dh_type1"/>
    <property type="match status" value="1"/>
</dbReference>
<dbReference type="InterPro" id="IPR013785">
    <property type="entry name" value="Aldolase_TIM"/>
</dbReference>
<dbReference type="InterPro" id="IPR050074">
    <property type="entry name" value="DHO_dehydrogenase"/>
</dbReference>
<dbReference type="InterPro" id="IPR033886">
    <property type="entry name" value="DHOD_1A"/>
</dbReference>
<dbReference type="InterPro" id="IPR023359">
    <property type="entry name" value="Dihydro_DH_chainA_dom2"/>
</dbReference>
<dbReference type="InterPro" id="IPR024920">
    <property type="entry name" value="Dihydroorotate_DH_1"/>
</dbReference>
<dbReference type="InterPro" id="IPR012135">
    <property type="entry name" value="Dihydroorotate_DH_1_2"/>
</dbReference>
<dbReference type="InterPro" id="IPR005720">
    <property type="entry name" value="Dihydroorotate_DH_cat"/>
</dbReference>
<dbReference type="InterPro" id="IPR001295">
    <property type="entry name" value="Dihydroorotate_DH_CS"/>
</dbReference>
<dbReference type="NCBIfam" id="NF002702">
    <property type="entry name" value="PRK02506.1"/>
    <property type="match status" value="1"/>
</dbReference>
<dbReference type="PANTHER" id="PTHR48109:SF1">
    <property type="entry name" value="DIHYDROOROTATE DEHYDROGENASE (FUMARATE)"/>
    <property type="match status" value="1"/>
</dbReference>
<dbReference type="PANTHER" id="PTHR48109">
    <property type="entry name" value="DIHYDROOROTATE DEHYDROGENASE (QUINONE), MITOCHONDRIAL-RELATED"/>
    <property type="match status" value="1"/>
</dbReference>
<dbReference type="Pfam" id="PF01180">
    <property type="entry name" value="DHO_dh"/>
    <property type="match status" value="1"/>
</dbReference>
<dbReference type="PIRSF" id="PIRSF000164">
    <property type="entry name" value="DHO_oxidase"/>
    <property type="match status" value="1"/>
</dbReference>
<dbReference type="SUPFAM" id="SSF51395">
    <property type="entry name" value="FMN-linked oxidoreductases"/>
    <property type="match status" value="1"/>
</dbReference>
<dbReference type="PROSITE" id="PS00911">
    <property type="entry name" value="DHODEHASE_1"/>
    <property type="match status" value="1"/>
</dbReference>
<comment type="function">
    <text evidence="1">Catalyzes the conversion of dihydroorotate to orotate with fumarate as the electron acceptor.</text>
</comment>
<comment type="catalytic activity">
    <reaction>
        <text>(S)-dihydroorotate + fumarate = orotate + succinate</text>
        <dbReference type="Rhea" id="RHEA:30059"/>
        <dbReference type="ChEBI" id="CHEBI:29806"/>
        <dbReference type="ChEBI" id="CHEBI:30031"/>
        <dbReference type="ChEBI" id="CHEBI:30839"/>
        <dbReference type="ChEBI" id="CHEBI:30864"/>
        <dbReference type="EC" id="1.3.98.1"/>
    </reaction>
</comment>
<comment type="cofactor">
    <cofactor evidence="1">
        <name>FMN</name>
        <dbReference type="ChEBI" id="CHEBI:58210"/>
    </cofactor>
    <text evidence="1">Binds 1 FMN per subunit.</text>
</comment>
<comment type="pathway">
    <text>Pyrimidine metabolism; UMP biosynthesis via de novo pathway.</text>
</comment>
<comment type="subunit">
    <text evidence="1">Homodimer.</text>
</comment>
<comment type="subcellular location">
    <subcellularLocation>
        <location evidence="1">Cytoplasm</location>
    </subcellularLocation>
</comment>
<comment type="similarity">
    <text evidence="2">Belongs to the dihydroorotate dehydrogenase family. Type 1 subfamily.</text>
</comment>
<feature type="chain" id="PRO_0000148390" description="Probable dihydroorotate dehydrogenase A (fumarate)">
    <location>
        <begin position="1"/>
        <end position="311"/>
    </location>
</feature>
<feature type="active site" description="Nucleophile">
    <location>
        <position position="130"/>
    </location>
</feature>
<feature type="binding site" evidence="1">
    <location>
        <position position="20"/>
    </location>
    <ligand>
        <name>FMN</name>
        <dbReference type="ChEBI" id="CHEBI:58210"/>
    </ligand>
</feature>
<feature type="binding site" evidence="1">
    <location>
        <begin position="44"/>
        <end position="45"/>
    </location>
    <ligand>
        <name>FMN</name>
        <dbReference type="ChEBI" id="CHEBI:58210"/>
    </ligand>
</feature>
<feature type="binding site" evidence="1">
    <location>
        <position position="44"/>
    </location>
    <ligand>
        <name>substrate</name>
    </ligand>
</feature>
<feature type="binding site" evidence="1">
    <location>
        <begin position="68"/>
        <end position="72"/>
    </location>
    <ligand>
        <name>substrate</name>
    </ligand>
</feature>
<feature type="binding site" evidence="1">
    <location>
        <position position="127"/>
    </location>
    <ligand>
        <name>FMN</name>
        <dbReference type="ChEBI" id="CHEBI:58210"/>
    </ligand>
</feature>
<feature type="binding site" evidence="1">
    <location>
        <position position="127"/>
    </location>
    <ligand>
        <name>substrate</name>
    </ligand>
</feature>
<feature type="binding site" evidence="1">
    <location>
        <position position="164"/>
    </location>
    <ligand>
        <name>FMN</name>
        <dbReference type="ChEBI" id="CHEBI:58210"/>
    </ligand>
</feature>
<feature type="binding site" evidence="1">
    <location>
        <position position="192"/>
    </location>
    <ligand>
        <name>FMN</name>
        <dbReference type="ChEBI" id="CHEBI:58210"/>
    </ligand>
</feature>
<feature type="binding site" evidence="1">
    <location>
        <begin position="193"/>
        <end position="194"/>
    </location>
    <ligand>
        <name>substrate</name>
    </ligand>
</feature>
<feature type="binding site" evidence="1">
    <location>
        <position position="221"/>
    </location>
    <ligand>
        <name>FMN</name>
        <dbReference type="ChEBI" id="CHEBI:58210"/>
    </ligand>
</feature>
<feature type="binding site" evidence="1">
    <location>
        <begin position="249"/>
        <end position="250"/>
    </location>
    <ligand>
        <name>FMN</name>
        <dbReference type="ChEBI" id="CHEBI:58210"/>
    </ligand>
</feature>
<feature type="binding site" evidence="1">
    <location>
        <begin position="271"/>
        <end position="272"/>
    </location>
    <ligand>
        <name>FMN</name>
        <dbReference type="ChEBI" id="CHEBI:58210"/>
    </ligand>
</feature>
<gene>
    <name type="primary">pyrDA</name>
    <name type="synonym">pydA</name>
    <name type="synonym">pyrD-1</name>
    <name type="ordered locus">EF_0285</name>
</gene>
<evidence type="ECO:0000250" key="1"/>
<evidence type="ECO:0000305" key="2"/>
<organism>
    <name type="scientific">Enterococcus faecalis (strain ATCC 700802 / V583)</name>
    <dbReference type="NCBI Taxonomy" id="226185"/>
    <lineage>
        <taxon>Bacteria</taxon>
        <taxon>Bacillati</taxon>
        <taxon>Bacillota</taxon>
        <taxon>Bacilli</taxon>
        <taxon>Lactobacillales</taxon>
        <taxon>Enterococcaceae</taxon>
        <taxon>Enterococcus</taxon>
    </lineage>
</organism>
<keyword id="KW-0963">Cytoplasm</keyword>
<keyword id="KW-0285">Flavoprotein</keyword>
<keyword id="KW-0288">FMN</keyword>
<keyword id="KW-0560">Oxidoreductase</keyword>
<keyword id="KW-0665">Pyrimidine biosynthesis</keyword>
<keyword id="KW-1185">Reference proteome</keyword>
<sequence length="311" mass="34477">MDISVEFSGHKLANVLMNASGIHCMTIKEMDELAASQAGAFVAKTATPNPRQGNEEPRYFDTPLGSINSMGLPNLGIDYYLDYQIARQKEFPEELRFLSVSGMNYEENIAILKKVQESEYTGVTEFNLSCPNLPGKPQIAYDFELTEKLLTEVFQFFTKPLGVKLPPFFDIAHFDAMAEILNKFPLVYVNSINSIGNGLYIDSDKEEVVIKPKGGFGGLGGEYVKPTALANVRAFAQRLKPEIKIIGTGGITCGKDVFEHLLCGATLVQVGTQLHQEGPQVFERLAKELQEIMAAKGYESIEEFRGKLKEM</sequence>
<accession>P59626</accession>
<reference key="1">
    <citation type="journal article" date="2003" name="Science">
        <title>Role of mobile DNA in the evolution of vancomycin-resistant Enterococcus faecalis.</title>
        <authorList>
            <person name="Paulsen I.T."/>
            <person name="Banerjei L."/>
            <person name="Myers G.S.A."/>
            <person name="Nelson K.E."/>
            <person name="Seshadri R."/>
            <person name="Read T.D."/>
            <person name="Fouts D.E."/>
            <person name="Eisen J.A."/>
            <person name="Gill S.R."/>
            <person name="Heidelberg J.F."/>
            <person name="Tettelin H."/>
            <person name="Dodson R.J."/>
            <person name="Umayam L.A."/>
            <person name="Brinkac L.M."/>
            <person name="Beanan M.J."/>
            <person name="Daugherty S.C."/>
            <person name="DeBoy R.T."/>
            <person name="Durkin S.A."/>
            <person name="Kolonay J.F."/>
            <person name="Madupu R."/>
            <person name="Nelson W.C."/>
            <person name="Vamathevan J.J."/>
            <person name="Tran B."/>
            <person name="Upton J."/>
            <person name="Hansen T."/>
            <person name="Shetty J."/>
            <person name="Khouri H.M."/>
            <person name="Utterback T.R."/>
            <person name="Radune D."/>
            <person name="Ketchum K.A."/>
            <person name="Dougherty B.A."/>
            <person name="Fraser C.M."/>
        </authorList>
    </citation>
    <scope>NUCLEOTIDE SEQUENCE [LARGE SCALE GENOMIC DNA]</scope>
    <source>
        <strain>ATCC 700802 / V583</strain>
    </source>
</reference>
<protein>
    <recommendedName>
        <fullName>Probable dihydroorotate dehydrogenase A (fumarate)</fullName>
        <shortName>DHOD A</shortName>
        <shortName>DHODase A</shortName>
        <shortName>DHOdehase A</shortName>
        <ecNumber>1.3.98.1</ecNumber>
    </recommendedName>
</protein>